<evidence type="ECO:0000255" key="1">
    <source>
        <dbReference type="HAMAP-Rule" id="MF_00075"/>
    </source>
</evidence>
<comment type="function">
    <text evidence="1">One of the essential components for the initiation of protein synthesis. Stabilizes the binding of IF-2 and IF-3 on the 30S subunit to which N-formylmethionyl-tRNA(fMet) subsequently binds. Helps modulate mRNA selection, yielding the 30S pre-initiation complex (PIC). Upon addition of the 50S ribosomal subunit IF-1, IF-2 and IF-3 are released leaving the mature 70S translation initiation complex.</text>
</comment>
<comment type="subunit">
    <text evidence="1">Component of the 30S ribosomal translation pre-initiation complex which assembles on the 30S ribosome in the order IF-2 and IF-3, IF-1 and N-formylmethionyl-tRNA(fMet); mRNA recruitment can occur at any time during PIC assembly.</text>
</comment>
<comment type="subcellular location">
    <subcellularLocation>
        <location evidence="1">Cytoplasm</location>
    </subcellularLocation>
</comment>
<comment type="similarity">
    <text evidence="1">Belongs to the IF-1 family.</text>
</comment>
<dbReference type="EMBL" id="BX571965">
    <property type="protein sequence ID" value="CAH35057.1"/>
    <property type="molecule type" value="Genomic_DNA"/>
</dbReference>
<dbReference type="RefSeq" id="YP_107685.1">
    <property type="nucleotide sequence ID" value="NC_006350.1"/>
</dbReference>
<dbReference type="SMR" id="Q63W31"/>
<dbReference type="STRING" id="272560.BPSL1062"/>
<dbReference type="KEGG" id="bps:BPSL1062"/>
<dbReference type="PATRIC" id="fig|272560.51.peg.497"/>
<dbReference type="eggNOG" id="COG0361">
    <property type="taxonomic scope" value="Bacteria"/>
</dbReference>
<dbReference type="Proteomes" id="UP000000605">
    <property type="component" value="Chromosome 1"/>
</dbReference>
<dbReference type="GO" id="GO:0005829">
    <property type="term" value="C:cytosol"/>
    <property type="evidence" value="ECO:0007669"/>
    <property type="project" value="TreeGrafter"/>
</dbReference>
<dbReference type="GO" id="GO:0043022">
    <property type="term" value="F:ribosome binding"/>
    <property type="evidence" value="ECO:0007669"/>
    <property type="project" value="UniProtKB-UniRule"/>
</dbReference>
<dbReference type="GO" id="GO:0019843">
    <property type="term" value="F:rRNA binding"/>
    <property type="evidence" value="ECO:0007669"/>
    <property type="project" value="UniProtKB-UniRule"/>
</dbReference>
<dbReference type="GO" id="GO:0003743">
    <property type="term" value="F:translation initiation factor activity"/>
    <property type="evidence" value="ECO:0007669"/>
    <property type="project" value="UniProtKB-UniRule"/>
</dbReference>
<dbReference type="CDD" id="cd04451">
    <property type="entry name" value="S1_IF1"/>
    <property type="match status" value="1"/>
</dbReference>
<dbReference type="FunFam" id="2.40.50.140:FF:000002">
    <property type="entry name" value="Translation initiation factor IF-1"/>
    <property type="match status" value="1"/>
</dbReference>
<dbReference type="Gene3D" id="2.40.50.140">
    <property type="entry name" value="Nucleic acid-binding proteins"/>
    <property type="match status" value="1"/>
</dbReference>
<dbReference type="HAMAP" id="MF_00075">
    <property type="entry name" value="IF_1"/>
    <property type="match status" value="1"/>
</dbReference>
<dbReference type="InterPro" id="IPR012340">
    <property type="entry name" value="NA-bd_OB-fold"/>
</dbReference>
<dbReference type="InterPro" id="IPR006196">
    <property type="entry name" value="RNA-binding_domain_S1_IF1"/>
</dbReference>
<dbReference type="InterPro" id="IPR003029">
    <property type="entry name" value="S1_domain"/>
</dbReference>
<dbReference type="InterPro" id="IPR004368">
    <property type="entry name" value="TIF_IF1"/>
</dbReference>
<dbReference type="NCBIfam" id="TIGR00008">
    <property type="entry name" value="infA"/>
    <property type="match status" value="1"/>
</dbReference>
<dbReference type="PANTHER" id="PTHR33370">
    <property type="entry name" value="TRANSLATION INITIATION FACTOR IF-1, CHLOROPLASTIC"/>
    <property type="match status" value="1"/>
</dbReference>
<dbReference type="PANTHER" id="PTHR33370:SF1">
    <property type="entry name" value="TRANSLATION INITIATION FACTOR IF-1, CHLOROPLASTIC"/>
    <property type="match status" value="1"/>
</dbReference>
<dbReference type="Pfam" id="PF01176">
    <property type="entry name" value="eIF-1a"/>
    <property type="match status" value="1"/>
</dbReference>
<dbReference type="SMART" id="SM00316">
    <property type="entry name" value="S1"/>
    <property type="match status" value="1"/>
</dbReference>
<dbReference type="SUPFAM" id="SSF50249">
    <property type="entry name" value="Nucleic acid-binding proteins"/>
    <property type="match status" value="1"/>
</dbReference>
<dbReference type="PROSITE" id="PS50832">
    <property type="entry name" value="S1_IF1_TYPE"/>
    <property type="match status" value="1"/>
</dbReference>
<gene>
    <name evidence="1" type="primary">infA1</name>
    <name type="ordered locus">BPSL1062</name>
</gene>
<proteinExistence type="inferred from homology"/>
<name>IF11_BURPS</name>
<sequence>MAKEELIELDGIVDEVLPDSRYRVTLDNGVVVGAYASGQMRRHRIRILAGDRVTLELSVYDLTKGRINFRHKDERRSDAAPRASARRR</sequence>
<protein>
    <recommendedName>
        <fullName evidence="1">Translation initiation factor IF-1 1</fullName>
    </recommendedName>
</protein>
<keyword id="KW-0963">Cytoplasm</keyword>
<keyword id="KW-0396">Initiation factor</keyword>
<keyword id="KW-0648">Protein biosynthesis</keyword>
<keyword id="KW-1185">Reference proteome</keyword>
<keyword id="KW-0694">RNA-binding</keyword>
<keyword id="KW-0699">rRNA-binding</keyword>
<organism>
    <name type="scientific">Burkholderia pseudomallei (strain K96243)</name>
    <dbReference type="NCBI Taxonomy" id="272560"/>
    <lineage>
        <taxon>Bacteria</taxon>
        <taxon>Pseudomonadati</taxon>
        <taxon>Pseudomonadota</taxon>
        <taxon>Betaproteobacteria</taxon>
        <taxon>Burkholderiales</taxon>
        <taxon>Burkholderiaceae</taxon>
        <taxon>Burkholderia</taxon>
        <taxon>pseudomallei group</taxon>
    </lineage>
</organism>
<reference key="1">
    <citation type="journal article" date="2004" name="Proc. Natl. Acad. Sci. U.S.A.">
        <title>Genomic plasticity of the causative agent of melioidosis, Burkholderia pseudomallei.</title>
        <authorList>
            <person name="Holden M.T.G."/>
            <person name="Titball R.W."/>
            <person name="Peacock S.J."/>
            <person name="Cerdeno-Tarraga A.-M."/>
            <person name="Atkins T."/>
            <person name="Crossman L.C."/>
            <person name="Pitt T."/>
            <person name="Churcher C."/>
            <person name="Mungall K.L."/>
            <person name="Bentley S.D."/>
            <person name="Sebaihia M."/>
            <person name="Thomson N.R."/>
            <person name="Bason N."/>
            <person name="Beacham I.R."/>
            <person name="Brooks K."/>
            <person name="Brown K.A."/>
            <person name="Brown N.F."/>
            <person name="Challis G.L."/>
            <person name="Cherevach I."/>
            <person name="Chillingworth T."/>
            <person name="Cronin A."/>
            <person name="Crossett B."/>
            <person name="Davis P."/>
            <person name="DeShazer D."/>
            <person name="Feltwell T."/>
            <person name="Fraser A."/>
            <person name="Hance Z."/>
            <person name="Hauser H."/>
            <person name="Holroyd S."/>
            <person name="Jagels K."/>
            <person name="Keith K.E."/>
            <person name="Maddison M."/>
            <person name="Moule S."/>
            <person name="Price C."/>
            <person name="Quail M.A."/>
            <person name="Rabbinowitsch E."/>
            <person name="Rutherford K."/>
            <person name="Sanders M."/>
            <person name="Simmonds M."/>
            <person name="Songsivilai S."/>
            <person name="Stevens K."/>
            <person name="Tumapa S."/>
            <person name="Vesaratchavest M."/>
            <person name="Whitehead S."/>
            <person name="Yeats C."/>
            <person name="Barrell B.G."/>
            <person name="Oyston P.C.F."/>
            <person name="Parkhill J."/>
        </authorList>
    </citation>
    <scope>NUCLEOTIDE SEQUENCE [LARGE SCALE GENOMIC DNA]</scope>
    <source>
        <strain>K96243</strain>
    </source>
</reference>
<accession>Q63W31</accession>
<feature type="chain" id="PRO_0000095761" description="Translation initiation factor IF-1 1">
    <location>
        <begin position="1"/>
        <end position="88"/>
    </location>
</feature>
<feature type="domain" description="S1-like" evidence="1">
    <location>
        <begin position="1"/>
        <end position="72"/>
    </location>
</feature>